<evidence type="ECO:0000255" key="1">
    <source>
        <dbReference type="HAMAP-Rule" id="MF_00815"/>
    </source>
</evidence>
<protein>
    <recommendedName>
        <fullName evidence="1">ATP synthase gamma chain</fullName>
    </recommendedName>
    <alternativeName>
        <fullName evidence="1">ATP synthase F1 sector gamma subunit</fullName>
    </alternativeName>
    <alternativeName>
        <fullName evidence="1">F-ATPase gamma subunit</fullName>
    </alternativeName>
</protein>
<name>ATPG_CAMJR</name>
<organism>
    <name type="scientific">Campylobacter jejuni (strain RM1221)</name>
    <dbReference type="NCBI Taxonomy" id="195099"/>
    <lineage>
        <taxon>Bacteria</taxon>
        <taxon>Pseudomonadati</taxon>
        <taxon>Campylobacterota</taxon>
        <taxon>Epsilonproteobacteria</taxon>
        <taxon>Campylobacterales</taxon>
        <taxon>Campylobacteraceae</taxon>
        <taxon>Campylobacter</taxon>
    </lineage>
</organism>
<dbReference type="EMBL" id="CP000025">
    <property type="protein sequence ID" value="AAW34696.1"/>
    <property type="molecule type" value="Genomic_DNA"/>
</dbReference>
<dbReference type="RefSeq" id="WP_002860587.1">
    <property type="nucleotide sequence ID" value="NC_003912.7"/>
</dbReference>
<dbReference type="SMR" id="Q5HX60"/>
<dbReference type="KEGG" id="cjr:CJE0101"/>
<dbReference type="HOGENOM" id="CLU_050669_0_1_7"/>
<dbReference type="GO" id="GO:0005886">
    <property type="term" value="C:plasma membrane"/>
    <property type="evidence" value="ECO:0007669"/>
    <property type="project" value="UniProtKB-SubCell"/>
</dbReference>
<dbReference type="GO" id="GO:0045259">
    <property type="term" value="C:proton-transporting ATP synthase complex"/>
    <property type="evidence" value="ECO:0007669"/>
    <property type="project" value="UniProtKB-KW"/>
</dbReference>
<dbReference type="GO" id="GO:0005524">
    <property type="term" value="F:ATP binding"/>
    <property type="evidence" value="ECO:0007669"/>
    <property type="project" value="UniProtKB-UniRule"/>
</dbReference>
<dbReference type="GO" id="GO:0046933">
    <property type="term" value="F:proton-transporting ATP synthase activity, rotational mechanism"/>
    <property type="evidence" value="ECO:0007669"/>
    <property type="project" value="UniProtKB-UniRule"/>
</dbReference>
<dbReference type="GO" id="GO:0042777">
    <property type="term" value="P:proton motive force-driven plasma membrane ATP synthesis"/>
    <property type="evidence" value="ECO:0007669"/>
    <property type="project" value="UniProtKB-UniRule"/>
</dbReference>
<dbReference type="CDD" id="cd12151">
    <property type="entry name" value="F1-ATPase_gamma"/>
    <property type="match status" value="1"/>
</dbReference>
<dbReference type="FunFam" id="3.40.1380.10:FF:000006">
    <property type="entry name" value="ATP synthase gamma chain"/>
    <property type="match status" value="1"/>
</dbReference>
<dbReference type="Gene3D" id="3.40.1380.10">
    <property type="match status" value="1"/>
</dbReference>
<dbReference type="Gene3D" id="1.10.287.80">
    <property type="entry name" value="ATP synthase, gamma subunit, helix hairpin domain"/>
    <property type="match status" value="1"/>
</dbReference>
<dbReference type="HAMAP" id="MF_00815">
    <property type="entry name" value="ATP_synth_gamma_bact"/>
    <property type="match status" value="1"/>
</dbReference>
<dbReference type="InterPro" id="IPR035968">
    <property type="entry name" value="ATP_synth_F1_ATPase_gsu"/>
</dbReference>
<dbReference type="InterPro" id="IPR000131">
    <property type="entry name" value="ATP_synth_F1_gsu"/>
</dbReference>
<dbReference type="NCBIfam" id="TIGR01146">
    <property type="entry name" value="ATPsyn_F1gamma"/>
    <property type="match status" value="1"/>
</dbReference>
<dbReference type="PANTHER" id="PTHR11693">
    <property type="entry name" value="ATP SYNTHASE GAMMA CHAIN"/>
    <property type="match status" value="1"/>
</dbReference>
<dbReference type="PANTHER" id="PTHR11693:SF22">
    <property type="entry name" value="ATP SYNTHASE SUBUNIT GAMMA, MITOCHONDRIAL"/>
    <property type="match status" value="1"/>
</dbReference>
<dbReference type="Pfam" id="PF00231">
    <property type="entry name" value="ATP-synt"/>
    <property type="match status" value="1"/>
</dbReference>
<dbReference type="PRINTS" id="PR00126">
    <property type="entry name" value="ATPASEGAMMA"/>
</dbReference>
<dbReference type="SUPFAM" id="SSF52943">
    <property type="entry name" value="ATP synthase (F1-ATPase), gamma subunit"/>
    <property type="match status" value="1"/>
</dbReference>
<feature type="chain" id="PRO_0000073261" description="ATP synthase gamma chain">
    <location>
        <begin position="1"/>
        <end position="294"/>
    </location>
</feature>
<accession>Q5HX60</accession>
<keyword id="KW-0066">ATP synthesis</keyword>
<keyword id="KW-0997">Cell inner membrane</keyword>
<keyword id="KW-1003">Cell membrane</keyword>
<keyword id="KW-0139">CF(1)</keyword>
<keyword id="KW-0375">Hydrogen ion transport</keyword>
<keyword id="KW-0406">Ion transport</keyword>
<keyword id="KW-0472">Membrane</keyword>
<keyword id="KW-0813">Transport</keyword>
<proteinExistence type="inferred from homology"/>
<sequence>MSNLKEIKRKIKSVHNTQKTTNAMKLVSTAKLKKAEEAAKRSKIYAQKIDEILSEISFQINKIVHNEDDVRLSLFHKKEQIKTVDLIFITADKGLCGGFNIKTLKTVSEMLKEYEAKNINIRLRAIGKTGIEYFNFQKIELLEKYFHLSSSPDYEKACEVIHAAVDDFLNGNTDEVILVHNGYKNMITQELKINHLIPVEPKSIEQTHNSLLELEPEGTELLEDLMKTYFEYNMYYALIDSLAAEHSARMQAMDNATNNAKARVKQLNLAYNKARQESITTELIEIISGVESMK</sequence>
<gene>
    <name evidence="1" type="primary">atpG</name>
    <name type="ordered locus">CJE0101</name>
</gene>
<comment type="function">
    <text evidence="1">Produces ATP from ADP in the presence of a proton gradient across the membrane. The gamma chain is believed to be important in regulating ATPase activity and the flow of protons through the CF(0) complex.</text>
</comment>
<comment type="subunit">
    <text evidence="1">F-type ATPases have 2 components, CF(1) - the catalytic core - and CF(0) - the membrane proton channel. CF(1) has five subunits: alpha(3), beta(3), gamma(1), delta(1), epsilon(1). CF(0) has three main subunits: a, b and c.</text>
</comment>
<comment type="subcellular location">
    <subcellularLocation>
        <location evidence="1">Cell inner membrane</location>
        <topology evidence="1">Peripheral membrane protein</topology>
    </subcellularLocation>
</comment>
<comment type="similarity">
    <text evidence="1">Belongs to the ATPase gamma chain family.</text>
</comment>
<reference key="1">
    <citation type="journal article" date="2005" name="PLoS Biol.">
        <title>Major structural differences and novel potential virulence mechanisms from the genomes of multiple Campylobacter species.</title>
        <authorList>
            <person name="Fouts D.E."/>
            <person name="Mongodin E.F."/>
            <person name="Mandrell R.E."/>
            <person name="Miller W.G."/>
            <person name="Rasko D.A."/>
            <person name="Ravel J."/>
            <person name="Brinkac L.M."/>
            <person name="DeBoy R.T."/>
            <person name="Parker C.T."/>
            <person name="Daugherty S.C."/>
            <person name="Dodson R.J."/>
            <person name="Durkin A.S."/>
            <person name="Madupu R."/>
            <person name="Sullivan S.A."/>
            <person name="Shetty J.U."/>
            <person name="Ayodeji M.A."/>
            <person name="Shvartsbeyn A."/>
            <person name="Schatz M.C."/>
            <person name="Badger J.H."/>
            <person name="Fraser C.M."/>
            <person name="Nelson K.E."/>
        </authorList>
    </citation>
    <scope>NUCLEOTIDE SEQUENCE [LARGE SCALE GENOMIC DNA]</scope>
    <source>
        <strain>RM1221</strain>
    </source>
</reference>